<name>RUVA_ORITB</name>
<keyword id="KW-0963">Cytoplasm</keyword>
<keyword id="KW-0227">DNA damage</keyword>
<keyword id="KW-0233">DNA recombination</keyword>
<keyword id="KW-0234">DNA repair</keyword>
<keyword id="KW-0238">DNA-binding</keyword>
<keyword id="KW-1185">Reference proteome</keyword>
<organism>
    <name type="scientific">Orientia tsutsugamushi (strain Boryong)</name>
    <name type="common">Rickettsia tsutsugamushi</name>
    <dbReference type="NCBI Taxonomy" id="357244"/>
    <lineage>
        <taxon>Bacteria</taxon>
        <taxon>Pseudomonadati</taxon>
        <taxon>Pseudomonadota</taxon>
        <taxon>Alphaproteobacteria</taxon>
        <taxon>Rickettsiales</taxon>
        <taxon>Rickettsiaceae</taxon>
        <taxon>Rickettsieae</taxon>
        <taxon>Orientia</taxon>
    </lineage>
</organism>
<protein>
    <recommendedName>
        <fullName evidence="1">Holliday junction branch migration complex subunit RuvA</fullName>
    </recommendedName>
</protein>
<comment type="function">
    <text evidence="1">The RuvA-RuvB-RuvC complex processes Holliday junction (HJ) DNA during genetic recombination and DNA repair, while the RuvA-RuvB complex plays an important role in the rescue of blocked DNA replication forks via replication fork reversal (RFR). RuvA specifically binds to HJ cruciform DNA, conferring on it an open structure. The RuvB hexamer acts as an ATP-dependent pump, pulling dsDNA into and through the RuvAB complex. HJ branch migration allows RuvC to scan DNA until it finds its consensus sequence, where it cleaves and resolves the cruciform DNA.</text>
</comment>
<comment type="subunit">
    <text evidence="1">Homotetramer. Forms an RuvA(8)-RuvB(12)-Holliday junction (HJ) complex. HJ DNA is sandwiched between 2 RuvA tetramers; dsDNA enters through RuvA and exits via RuvB. An RuvB hexamer assembles on each DNA strand where it exits the tetramer. Each RuvB hexamer is contacted by two RuvA subunits (via domain III) on 2 adjacent RuvB subunits; this complex drives branch migration. In the full resolvosome a probable DNA-RuvA(4)-RuvB(12)-RuvC(2) complex forms which resolves the HJ.</text>
</comment>
<comment type="subcellular location">
    <subcellularLocation>
        <location evidence="1">Cytoplasm</location>
    </subcellularLocation>
</comment>
<comment type="domain">
    <text evidence="1">Has three domains with a flexible linker between the domains II and III and assumes an 'L' shape. Domain III is highly mobile and contacts RuvB.</text>
</comment>
<comment type="similarity">
    <text evidence="1">Belongs to the RuvA family.</text>
</comment>
<feature type="chain" id="PRO_1000002505" description="Holliday junction branch migration complex subunit RuvA">
    <location>
        <begin position="1"/>
        <end position="205"/>
    </location>
</feature>
<feature type="region of interest" description="Domain I" evidence="1">
    <location>
        <begin position="1"/>
        <end position="65"/>
    </location>
</feature>
<feature type="region of interest" description="Domain II" evidence="1">
    <location>
        <begin position="66"/>
        <end position="144"/>
    </location>
</feature>
<feature type="region of interest" description="Flexible linker" evidence="1">
    <location>
        <begin position="145"/>
        <end position="153"/>
    </location>
</feature>
<feature type="region of interest" description="Domain III" evidence="1">
    <location>
        <begin position="154"/>
        <end position="205"/>
    </location>
</feature>
<accession>A5CEJ4</accession>
<reference key="1">
    <citation type="journal article" date="2007" name="Proc. Natl. Acad. Sci. U.S.A.">
        <title>The Orientia tsutsugamushi genome reveals massive proliferation of conjugative type IV secretion system and host-cell interaction genes.</title>
        <authorList>
            <person name="Cho N.-H."/>
            <person name="Kim H.-R."/>
            <person name="Lee J.-H."/>
            <person name="Kim S.-Y."/>
            <person name="Kim J."/>
            <person name="Cha S."/>
            <person name="Kim S.-Y."/>
            <person name="Darby A.C."/>
            <person name="Fuxelius H.-H."/>
            <person name="Yin J."/>
            <person name="Kim J.H."/>
            <person name="Kim J."/>
            <person name="Lee S.J."/>
            <person name="Koh Y.-S."/>
            <person name="Jang W.-J."/>
            <person name="Park K.-H."/>
            <person name="Andersson S.G.E."/>
            <person name="Choi M.-S."/>
            <person name="Kim I.-S."/>
        </authorList>
    </citation>
    <scope>NUCLEOTIDE SEQUENCE [LARGE SCALE GENOMIC DNA]</scope>
    <source>
        <strain>Boryong</strain>
    </source>
</reference>
<gene>
    <name evidence="1" type="primary">ruvA</name>
    <name type="ordered locus">OTBS_1497</name>
</gene>
<proteinExistence type="inferred from homology"/>
<evidence type="ECO:0000255" key="1">
    <source>
        <dbReference type="HAMAP-Rule" id="MF_00031"/>
    </source>
</evidence>
<sequence>MIAKLKGILDSITDSYLIIDINGVGYQVYSSGKTLMKLIKEEGSIVSLFIETHVREDRIHLFGFLDNTEKVAFNMLQSVSGIGTKMALHILSNLTPHQLQIAISSQNRHQLKAISGVGPKLIDRLMIELRDKVANINTIANNTSLAILSTDSNTHDNILSDAITALIALGISRAEATQILSDIYALFPSISVNELVRTALQRRAK</sequence>
<dbReference type="EMBL" id="AM494475">
    <property type="protein sequence ID" value="CAM80579.1"/>
    <property type="molecule type" value="Genomic_DNA"/>
</dbReference>
<dbReference type="RefSeq" id="WP_011944918.1">
    <property type="nucleotide sequence ID" value="NC_009488.1"/>
</dbReference>
<dbReference type="SMR" id="A5CEJ4"/>
<dbReference type="KEGG" id="ots:OTBS_1497"/>
<dbReference type="eggNOG" id="COG0632">
    <property type="taxonomic scope" value="Bacteria"/>
</dbReference>
<dbReference type="HOGENOM" id="CLU_087936_3_0_5"/>
<dbReference type="Proteomes" id="UP000001565">
    <property type="component" value="Chromosome"/>
</dbReference>
<dbReference type="GO" id="GO:0005737">
    <property type="term" value="C:cytoplasm"/>
    <property type="evidence" value="ECO:0007669"/>
    <property type="project" value="UniProtKB-SubCell"/>
</dbReference>
<dbReference type="GO" id="GO:0009379">
    <property type="term" value="C:Holliday junction helicase complex"/>
    <property type="evidence" value="ECO:0007669"/>
    <property type="project" value="InterPro"/>
</dbReference>
<dbReference type="GO" id="GO:0048476">
    <property type="term" value="C:Holliday junction resolvase complex"/>
    <property type="evidence" value="ECO:0007669"/>
    <property type="project" value="UniProtKB-UniRule"/>
</dbReference>
<dbReference type="GO" id="GO:0005524">
    <property type="term" value="F:ATP binding"/>
    <property type="evidence" value="ECO:0007669"/>
    <property type="project" value="InterPro"/>
</dbReference>
<dbReference type="GO" id="GO:0000400">
    <property type="term" value="F:four-way junction DNA binding"/>
    <property type="evidence" value="ECO:0007669"/>
    <property type="project" value="UniProtKB-UniRule"/>
</dbReference>
<dbReference type="GO" id="GO:0009378">
    <property type="term" value="F:four-way junction helicase activity"/>
    <property type="evidence" value="ECO:0007669"/>
    <property type="project" value="InterPro"/>
</dbReference>
<dbReference type="GO" id="GO:0006310">
    <property type="term" value="P:DNA recombination"/>
    <property type="evidence" value="ECO:0007669"/>
    <property type="project" value="UniProtKB-UniRule"/>
</dbReference>
<dbReference type="GO" id="GO:0006281">
    <property type="term" value="P:DNA repair"/>
    <property type="evidence" value="ECO:0007669"/>
    <property type="project" value="UniProtKB-UniRule"/>
</dbReference>
<dbReference type="CDD" id="cd14332">
    <property type="entry name" value="UBA_RuvA_C"/>
    <property type="match status" value="1"/>
</dbReference>
<dbReference type="Gene3D" id="1.10.150.20">
    <property type="entry name" value="5' to 3' exonuclease, C-terminal subdomain"/>
    <property type="match status" value="1"/>
</dbReference>
<dbReference type="Gene3D" id="1.10.8.10">
    <property type="entry name" value="DNA helicase RuvA subunit, C-terminal domain"/>
    <property type="match status" value="1"/>
</dbReference>
<dbReference type="Gene3D" id="2.40.50.140">
    <property type="entry name" value="Nucleic acid-binding proteins"/>
    <property type="match status" value="1"/>
</dbReference>
<dbReference type="HAMAP" id="MF_00031">
    <property type="entry name" value="DNA_HJ_migration_RuvA"/>
    <property type="match status" value="1"/>
</dbReference>
<dbReference type="InterPro" id="IPR013849">
    <property type="entry name" value="DNA_helicase_Holl-junc_RuvA_I"/>
</dbReference>
<dbReference type="InterPro" id="IPR003583">
    <property type="entry name" value="Hlx-hairpin-Hlx_DNA-bd_motif"/>
</dbReference>
<dbReference type="InterPro" id="IPR012340">
    <property type="entry name" value="NA-bd_OB-fold"/>
</dbReference>
<dbReference type="InterPro" id="IPR000085">
    <property type="entry name" value="RuvA"/>
</dbReference>
<dbReference type="InterPro" id="IPR010994">
    <property type="entry name" value="RuvA_2-like"/>
</dbReference>
<dbReference type="InterPro" id="IPR011114">
    <property type="entry name" value="RuvA_C"/>
</dbReference>
<dbReference type="InterPro" id="IPR036267">
    <property type="entry name" value="RuvA_C_sf"/>
</dbReference>
<dbReference type="NCBIfam" id="TIGR00084">
    <property type="entry name" value="ruvA"/>
    <property type="match status" value="1"/>
</dbReference>
<dbReference type="Pfam" id="PF14520">
    <property type="entry name" value="HHH_5"/>
    <property type="match status" value="1"/>
</dbReference>
<dbReference type="Pfam" id="PF07499">
    <property type="entry name" value="RuvA_C"/>
    <property type="match status" value="1"/>
</dbReference>
<dbReference type="Pfam" id="PF01330">
    <property type="entry name" value="RuvA_N"/>
    <property type="match status" value="1"/>
</dbReference>
<dbReference type="SMART" id="SM00278">
    <property type="entry name" value="HhH1"/>
    <property type="match status" value="2"/>
</dbReference>
<dbReference type="SUPFAM" id="SSF46929">
    <property type="entry name" value="DNA helicase RuvA subunit, C-terminal domain"/>
    <property type="match status" value="1"/>
</dbReference>
<dbReference type="SUPFAM" id="SSF50249">
    <property type="entry name" value="Nucleic acid-binding proteins"/>
    <property type="match status" value="1"/>
</dbReference>
<dbReference type="SUPFAM" id="SSF47781">
    <property type="entry name" value="RuvA domain 2-like"/>
    <property type="match status" value="1"/>
</dbReference>